<reference key="1">
    <citation type="journal article" date="2003" name="Nat. Biotechnol.">
        <title>The genome sequence of the entomopathogenic bacterium Photorhabdus luminescens.</title>
        <authorList>
            <person name="Duchaud E."/>
            <person name="Rusniok C."/>
            <person name="Frangeul L."/>
            <person name="Buchrieser C."/>
            <person name="Givaudan A."/>
            <person name="Taourit S."/>
            <person name="Bocs S."/>
            <person name="Boursaux-Eude C."/>
            <person name="Chandler M."/>
            <person name="Charles J.-F."/>
            <person name="Dassa E."/>
            <person name="Derose R."/>
            <person name="Derzelle S."/>
            <person name="Freyssinet G."/>
            <person name="Gaudriault S."/>
            <person name="Medigue C."/>
            <person name="Lanois A."/>
            <person name="Powell K."/>
            <person name="Siguier P."/>
            <person name="Vincent R."/>
            <person name="Wingate V."/>
            <person name="Zouine M."/>
            <person name="Glaser P."/>
            <person name="Boemare N."/>
            <person name="Danchin A."/>
            <person name="Kunst F."/>
        </authorList>
    </citation>
    <scope>NUCLEOTIDE SEQUENCE [LARGE SCALE GENOMIC DNA]</scope>
    <source>
        <strain>DSM 15139 / CIP 105565 / TT01</strain>
    </source>
</reference>
<evidence type="ECO:0000255" key="1">
    <source>
        <dbReference type="HAMAP-Rule" id="MF_00578"/>
    </source>
</evidence>
<gene>
    <name evidence="1" type="primary">gshA</name>
    <name type="ordered locus">plu1252</name>
</gene>
<name>GSH1_PHOLL</name>
<sequence length="519" mass="58738">MIPDVSRALSWLEAHPTILKGIRRGVERETLRITSDGSLAITEHPKTLGAALTHKWITTDFAESLLEFITPAGDDIKYTISFLSDIHRHTARVLDKEKMWPLSMPCFIDAEENITLAQYGASNVGRYKTLYREGLKNRYGALMQTISGVHYNFSLPIEFWRAWVGVEDAESGKEQISNGYFRLIRNYYRFGWVIPYLFGASPAICSSFLRGRETSFLFERTEDGTCYLPYATSLRMSNLGYTNKSQSDLNITFNNLHTYIDGLKKAIHKPSDEFAKLGTKQGDKHIQLNTNVLQIENELYAPIRPKRVTRGNESPSDALLRGGVEYIEVRSLDINPFAAIGVNETQIRFLDLFLIWCVLAEAPEMGSDELDCCRKNWNRVILEGRKPGQMIGLGCGSVEEPLAKVGKKLFSDLKRVAAILDSCSGTQYQKVCEELIATFDDSSLTLSARVLEKMKSQGIGGFGLELADEYHQQLISEKYEVISDEQFAIERRASVERQDALEREDTMSFDEYLKQQTGC</sequence>
<comment type="catalytic activity">
    <reaction evidence="1">
        <text>L-cysteine + L-glutamate + ATP = gamma-L-glutamyl-L-cysteine + ADP + phosphate + H(+)</text>
        <dbReference type="Rhea" id="RHEA:13285"/>
        <dbReference type="ChEBI" id="CHEBI:15378"/>
        <dbReference type="ChEBI" id="CHEBI:29985"/>
        <dbReference type="ChEBI" id="CHEBI:30616"/>
        <dbReference type="ChEBI" id="CHEBI:35235"/>
        <dbReference type="ChEBI" id="CHEBI:43474"/>
        <dbReference type="ChEBI" id="CHEBI:58173"/>
        <dbReference type="ChEBI" id="CHEBI:456216"/>
        <dbReference type="EC" id="6.3.2.2"/>
    </reaction>
</comment>
<comment type="pathway">
    <text evidence="1">Sulfur metabolism; glutathione biosynthesis; glutathione from L-cysteine and L-glutamate: step 1/2.</text>
</comment>
<comment type="similarity">
    <text evidence="1">Belongs to the glutamate--cysteine ligase type 1 family. Type 1 subfamily.</text>
</comment>
<dbReference type="EC" id="6.3.2.2" evidence="1"/>
<dbReference type="EMBL" id="BX571863">
    <property type="protein sequence ID" value="CAE13546.1"/>
    <property type="molecule type" value="Genomic_DNA"/>
</dbReference>
<dbReference type="RefSeq" id="WP_011145576.1">
    <property type="nucleotide sequence ID" value="NC_005126.1"/>
</dbReference>
<dbReference type="SMR" id="Q7N7A4"/>
<dbReference type="STRING" id="243265.plu1252"/>
<dbReference type="GeneID" id="48847526"/>
<dbReference type="KEGG" id="plu:plu1252"/>
<dbReference type="eggNOG" id="COG2918">
    <property type="taxonomic scope" value="Bacteria"/>
</dbReference>
<dbReference type="HOGENOM" id="CLU_020728_3_0_6"/>
<dbReference type="OrthoDB" id="9803907at2"/>
<dbReference type="UniPathway" id="UPA00142">
    <property type="reaction ID" value="UER00209"/>
</dbReference>
<dbReference type="Proteomes" id="UP000002514">
    <property type="component" value="Chromosome"/>
</dbReference>
<dbReference type="GO" id="GO:0005829">
    <property type="term" value="C:cytosol"/>
    <property type="evidence" value="ECO:0007669"/>
    <property type="project" value="TreeGrafter"/>
</dbReference>
<dbReference type="GO" id="GO:0005524">
    <property type="term" value="F:ATP binding"/>
    <property type="evidence" value="ECO:0007669"/>
    <property type="project" value="UniProtKB-KW"/>
</dbReference>
<dbReference type="GO" id="GO:0004357">
    <property type="term" value="F:glutamate-cysteine ligase activity"/>
    <property type="evidence" value="ECO:0007669"/>
    <property type="project" value="UniProtKB-UniRule"/>
</dbReference>
<dbReference type="GO" id="GO:0046872">
    <property type="term" value="F:metal ion binding"/>
    <property type="evidence" value="ECO:0007669"/>
    <property type="project" value="TreeGrafter"/>
</dbReference>
<dbReference type="GO" id="GO:0006750">
    <property type="term" value="P:glutathione biosynthetic process"/>
    <property type="evidence" value="ECO:0007669"/>
    <property type="project" value="UniProtKB-UniRule"/>
</dbReference>
<dbReference type="FunFam" id="3.30.590.20:FF:000001">
    <property type="entry name" value="Glutamate--cysteine ligase"/>
    <property type="match status" value="1"/>
</dbReference>
<dbReference type="Gene3D" id="3.30.590.20">
    <property type="match status" value="1"/>
</dbReference>
<dbReference type="HAMAP" id="MF_00578">
    <property type="entry name" value="Glu_cys_ligase"/>
    <property type="match status" value="1"/>
</dbReference>
<dbReference type="InterPro" id="IPR014746">
    <property type="entry name" value="Gln_synth/guanido_kin_cat_dom"/>
</dbReference>
<dbReference type="InterPro" id="IPR007370">
    <property type="entry name" value="Glu_cys_ligase"/>
</dbReference>
<dbReference type="InterPro" id="IPR006334">
    <property type="entry name" value="Glut_cys_ligase"/>
</dbReference>
<dbReference type="NCBIfam" id="TIGR01434">
    <property type="entry name" value="glu_cys_ligase"/>
    <property type="match status" value="1"/>
</dbReference>
<dbReference type="PANTHER" id="PTHR38761">
    <property type="entry name" value="GLUTAMATE--CYSTEINE LIGASE"/>
    <property type="match status" value="1"/>
</dbReference>
<dbReference type="PANTHER" id="PTHR38761:SF1">
    <property type="entry name" value="GLUTAMATE--CYSTEINE LIGASE"/>
    <property type="match status" value="1"/>
</dbReference>
<dbReference type="Pfam" id="PF04262">
    <property type="entry name" value="Glu_cys_ligase"/>
    <property type="match status" value="1"/>
</dbReference>
<dbReference type="SUPFAM" id="SSF55931">
    <property type="entry name" value="Glutamine synthetase/guanido kinase"/>
    <property type="match status" value="1"/>
</dbReference>
<proteinExistence type="inferred from homology"/>
<accession>Q7N7A4</accession>
<keyword id="KW-0067">ATP-binding</keyword>
<keyword id="KW-0317">Glutathione biosynthesis</keyword>
<keyword id="KW-0436">Ligase</keyword>
<keyword id="KW-0547">Nucleotide-binding</keyword>
<keyword id="KW-1185">Reference proteome</keyword>
<protein>
    <recommendedName>
        <fullName evidence="1">Glutamate--cysteine ligase</fullName>
        <ecNumber evidence="1">6.3.2.2</ecNumber>
    </recommendedName>
    <alternativeName>
        <fullName evidence="1">Gamma-ECS</fullName>
        <shortName evidence="1">GCS</shortName>
    </alternativeName>
    <alternativeName>
        <fullName evidence="1">Gamma-glutamylcysteine synthetase</fullName>
    </alternativeName>
</protein>
<organism>
    <name type="scientific">Photorhabdus laumondii subsp. laumondii (strain DSM 15139 / CIP 105565 / TT01)</name>
    <name type="common">Photorhabdus luminescens subsp. laumondii</name>
    <dbReference type="NCBI Taxonomy" id="243265"/>
    <lineage>
        <taxon>Bacteria</taxon>
        <taxon>Pseudomonadati</taxon>
        <taxon>Pseudomonadota</taxon>
        <taxon>Gammaproteobacteria</taxon>
        <taxon>Enterobacterales</taxon>
        <taxon>Morganellaceae</taxon>
        <taxon>Photorhabdus</taxon>
    </lineage>
</organism>
<feature type="chain" id="PRO_0000192530" description="Glutamate--cysteine ligase">
    <location>
        <begin position="1"/>
        <end position="519"/>
    </location>
</feature>